<comment type="subcellular location">
    <subcellularLocation>
        <location evidence="1">Secreted</location>
    </subcellularLocation>
</comment>
<comment type="similarity">
    <text evidence="3">Belongs to the DEFL family.</text>
</comment>
<protein>
    <recommendedName>
        <fullName>Putative defensin-like protein 231</fullName>
    </recommendedName>
    <alternativeName>
        <fullName>Putative S locus cysteine-rich-like protein 25</fullName>
        <shortName>Protein SCRL25</shortName>
        <shortName>SCR-like protein 25</shortName>
    </alternativeName>
</protein>
<name>DF231_ARATH</name>
<accession>P82644</accession>
<reference evidence="3" key="1">
    <citation type="journal article" date="1999" name="Nature">
        <title>Sequence and analysis of chromosome 4 of the plant Arabidopsis thaliana.</title>
        <authorList>
            <person name="Mayer K.F.X."/>
            <person name="Schueller C."/>
            <person name="Wambutt R."/>
            <person name="Murphy G."/>
            <person name="Volckaert G."/>
            <person name="Pohl T."/>
            <person name="Duesterhoeft A."/>
            <person name="Stiekema W."/>
            <person name="Entian K.-D."/>
            <person name="Terryn N."/>
            <person name="Harris B."/>
            <person name="Ansorge W."/>
            <person name="Brandt P."/>
            <person name="Grivell L.A."/>
            <person name="Rieger M."/>
            <person name="Weichselgartner M."/>
            <person name="de Simone V."/>
            <person name="Obermaier B."/>
            <person name="Mache R."/>
            <person name="Mueller M."/>
            <person name="Kreis M."/>
            <person name="Delseny M."/>
            <person name="Puigdomenech P."/>
            <person name="Watson M."/>
            <person name="Schmidtheini T."/>
            <person name="Reichert B."/>
            <person name="Portetelle D."/>
            <person name="Perez-Alonso M."/>
            <person name="Boutry M."/>
            <person name="Bancroft I."/>
            <person name="Vos P."/>
            <person name="Hoheisel J."/>
            <person name="Zimmermann W."/>
            <person name="Wedler H."/>
            <person name="Ridley P."/>
            <person name="Langham S.-A."/>
            <person name="McCullagh B."/>
            <person name="Bilham L."/>
            <person name="Robben J."/>
            <person name="van der Schueren J."/>
            <person name="Grymonprez B."/>
            <person name="Chuang Y.-J."/>
            <person name="Vandenbussche F."/>
            <person name="Braeken M."/>
            <person name="Weltjens I."/>
            <person name="Voet M."/>
            <person name="Bastiaens I."/>
            <person name="Aert R."/>
            <person name="Defoor E."/>
            <person name="Weitzenegger T."/>
            <person name="Bothe G."/>
            <person name="Ramsperger U."/>
            <person name="Hilbert H."/>
            <person name="Braun M."/>
            <person name="Holzer E."/>
            <person name="Brandt A."/>
            <person name="Peters S."/>
            <person name="van Staveren M."/>
            <person name="Dirkse W."/>
            <person name="Mooijman P."/>
            <person name="Klein Lankhorst R."/>
            <person name="Rose M."/>
            <person name="Hauf J."/>
            <person name="Koetter P."/>
            <person name="Berneiser S."/>
            <person name="Hempel S."/>
            <person name="Feldpausch M."/>
            <person name="Lamberth S."/>
            <person name="Van den Daele H."/>
            <person name="De Keyser A."/>
            <person name="Buysshaert C."/>
            <person name="Gielen J."/>
            <person name="Villarroel R."/>
            <person name="De Clercq R."/>
            <person name="van Montagu M."/>
            <person name="Rogers J."/>
            <person name="Cronin A."/>
            <person name="Quail M.A."/>
            <person name="Bray-Allen S."/>
            <person name="Clark L."/>
            <person name="Doggett J."/>
            <person name="Hall S."/>
            <person name="Kay M."/>
            <person name="Lennard N."/>
            <person name="McLay K."/>
            <person name="Mayes R."/>
            <person name="Pettett A."/>
            <person name="Rajandream M.A."/>
            <person name="Lyne M."/>
            <person name="Benes V."/>
            <person name="Rechmann S."/>
            <person name="Borkova D."/>
            <person name="Bloecker H."/>
            <person name="Scharfe M."/>
            <person name="Grimm M."/>
            <person name="Loehnert T.-H."/>
            <person name="Dose S."/>
            <person name="de Haan M."/>
            <person name="Maarse A.C."/>
            <person name="Schaefer M."/>
            <person name="Mueller-Auer S."/>
            <person name="Gabel C."/>
            <person name="Fuchs M."/>
            <person name="Fartmann B."/>
            <person name="Granderath K."/>
            <person name="Dauner D."/>
            <person name="Herzl A."/>
            <person name="Neumann S."/>
            <person name="Argiriou A."/>
            <person name="Vitale D."/>
            <person name="Liguori R."/>
            <person name="Piravandi E."/>
            <person name="Massenet O."/>
            <person name="Quigley F."/>
            <person name="Clabauld G."/>
            <person name="Muendlein A."/>
            <person name="Felber R."/>
            <person name="Schnabl S."/>
            <person name="Hiller R."/>
            <person name="Schmidt W."/>
            <person name="Lecharny A."/>
            <person name="Aubourg S."/>
            <person name="Chefdor F."/>
            <person name="Cooke R."/>
            <person name="Berger C."/>
            <person name="Monfort A."/>
            <person name="Casacuberta E."/>
            <person name="Gibbons T."/>
            <person name="Weber N."/>
            <person name="Vandenbol M."/>
            <person name="Bargues M."/>
            <person name="Terol J."/>
            <person name="Torres A."/>
            <person name="Perez-Perez A."/>
            <person name="Purnelle B."/>
            <person name="Bent E."/>
            <person name="Johnson S."/>
            <person name="Tacon D."/>
            <person name="Jesse T."/>
            <person name="Heijnen L."/>
            <person name="Schwarz S."/>
            <person name="Scholler P."/>
            <person name="Heber S."/>
            <person name="Francs P."/>
            <person name="Bielke C."/>
            <person name="Frishman D."/>
            <person name="Haase D."/>
            <person name="Lemcke K."/>
            <person name="Mewes H.-W."/>
            <person name="Stocker S."/>
            <person name="Zaccaria P."/>
            <person name="Bevan M."/>
            <person name="Wilson R.K."/>
            <person name="de la Bastide M."/>
            <person name="Habermann K."/>
            <person name="Parnell L."/>
            <person name="Dedhia N."/>
            <person name="Gnoj L."/>
            <person name="Schutz K."/>
            <person name="Huang E."/>
            <person name="Spiegel L."/>
            <person name="Sekhon M."/>
            <person name="Murray J."/>
            <person name="Sheet P."/>
            <person name="Cordes M."/>
            <person name="Abu-Threideh J."/>
            <person name="Stoneking T."/>
            <person name="Kalicki J."/>
            <person name="Graves T."/>
            <person name="Harmon G."/>
            <person name="Edwards J."/>
            <person name="Latreille P."/>
            <person name="Courtney L."/>
            <person name="Cloud J."/>
            <person name="Abbott A."/>
            <person name="Scott K."/>
            <person name="Johnson D."/>
            <person name="Minx P."/>
            <person name="Bentley D."/>
            <person name="Fulton B."/>
            <person name="Miller N."/>
            <person name="Greco T."/>
            <person name="Kemp K."/>
            <person name="Kramer J."/>
            <person name="Fulton L."/>
            <person name="Mardis E."/>
            <person name="Dante M."/>
            <person name="Pepin K."/>
            <person name="Hillier L.W."/>
            <person name="Nelson J."/>
            <person name="Spieth J."/>
            <person name="Ryan E."/>
            <person name="Andrews S."/>
            <person name="Geisel C."/>
            <person name="Layman D."/>
            <person name="Du H."/>
            <person name="Ali J."/>
            <person name="Berghoff A."/>
            <person name="Jones K."/>
            <person name="Drone K."/>
            <person name="Cotton M."/>
            <person name="Joshu C."/>
            <person name="Antonoiu B."/>
            <person name="Zidanic M."/>
            <person name="Strong C."/>
            <person name="Sun H."/>
            <person name="Lamar B."/>
            <person name="Yordan C."/>
            <person name="Ma P."/>
            <person name="Zhong J."/>
            <person name="Preston R."/>
            <person name="Vil D."/>
            <person name="Shekher M."/>
            <person name="Matero A."/>
            <person name="Shah R."/>
            <person name="Swaby I.K."/>
            <person name="O'Shaughnessy A."/>
            <person name="Rodriguez M."/>
            <person name="Hoffman J."/>
            <person name="Till S."/>
            <person name="Granat S."/>
            <person name="Shohdy N."/>
            <person name="Hasegawa A."/>
            <person name="Hameed A."/>
            <person name="Lodhi M."/>
            <person name="Johnson A."/>
            <person name="Chen E."/>
            <person name="Marra M.A."/>
            <person name="Martienssen R."/>
            <person name="McCombie W.R."/>
        </authorList>
    </citation>
    <scope>NUCLEOTIDE SEQUENCE [LARGE SCALE GENOMIC DNA]</scope>
    <source>
        <strain>cv. Columbia</strain>
    </source>
</reference>
<reference key="2">
    <citation type="journal article" date="2017" name="Plant J.">
        <title>Araport11: a complete reannotation of the Arabidopsis thaliana reference genome.</title>
        <authorList>
            <person name="Cheng C.Y."/>
            <person name="Krishnakumar V."/>
            <person name="Chan A.P."/>
            <person name="Thibaud-Nissen F."/>
            <person name="Schobel S."/>
            <person name="Town C.D."/>
        </authorList>
    </citation>
    <scope>GENOME REANNOTATION</scope>
    <source>
        <strain>cv. Columbia</strain>
    </source>
</reference>
<reference evidence="3" key="3">
    <citation type="journal article" date="2001" name="Plant Mol. Biol.">
        <title>Two large Arabidopsis thaliana gene families are homologous to the Brassica gene superfamily that encodes pollen coat proteins and the male component of the self-incompatibility response.</title>
        <authorList>
            <person name="Vanoosthuyse V."/>
            <person name="Miege C."/>
            <person name="Dumas C."/>
            <person name="Cock J.M."/>
        </authorList>
    </citation>
    <scope>IDENTIFICATION</scope>
</reference>
<reference key="4">
    <citation type="journal article" date="2005" name="Plant Physiol.">
        <title>Genome organization of more than 300 defensin-like genes in Arabidopsis.</title>
        <authorList>
            <person name="Silverstein K.A.T."/>
            <person name="Graham M.A."/>
            <person name="Paape T.D."/>
            <person name="VandenBosch K.A."/>
        </authorList>
    </citation>
    <scope>GENE FAMILY</scope>
</reference>
<feature type="signal peptide" evidence="2">
    <location>
        <begin position="1"/>
        <end position="26"/>
    </location>
</feature>
<feature type="chain" id="PRO_0000031951" description="Putative defensin-like protein 231">
    <location>
        <begin position="27"/>
        <end position="87"/>
    </location>
</feature>
<feature type="disulfide bond" evidence="1">
    <location>
        <begin position="30"/>
        <end position="85"/>
    </location>
</feature>
<feature type="disulfide bond" evidence="1">
    <location>
        <begin position="40"/>
        <end position="66"/>
    </location>
</feature>
<feature type="disulfide bond" evidence="1">
    <location>
        <begin position="48"/>
        <end position="79"/>
    </location>
</feature>
<feature type="disulfide bond" evidence="1">
    <location>
        <begin position="64"/>
        <end position="81"/>
    </location>
</feature>
<evidence type="ECO:0000250" key="1"/>
<evidence type="ECO:0000255" key="2"/>
<evidence type="ECO:0000305" key="3"/>
<dbReference type="EMBL" id="AL022537">
    <property type="status" value="NOT_ANNOTATED_CDS"/>
    <property type="molecule type" value="Genomic_DNA"/>
</dbReference>
<dbReference type="EMBL" id="AL161582">
    <property type="status" value="NOT_ANNOTATED_CDS"/>
    <property type="molecule type" value="Genomic_DNA"/>
</dbReference>
<dbReference type="EMBL" id="CP002687">
    <property type="protein sequence ID" value="AEE86107.1"/>
    <property type="molecule type" value="Genomic_DNA"/>
</dbReference>
<dbReference type="RefSeq" id="NP_001031775.1">
    <property type="nucleotide sequence ID" value="NM_001036698.2"/>
</dbReference>
<dbReference type="SMR" id="P82644"/>
<dbReference type="iPTMnet" id="P82644"/>
<dbReference type="PaxDb" id="3702-AT4G32714.1"/>
<dbReference type="ProteomicsDB" id="224645"/>
<dbReference type="EnsemblPlants" id="AT4G32714.1">
    <property type="protein sequence ID" value="AT4G32714.1"/>
    <property type="gene ID" value="AT4G32714"/>
</dbReference>
<dbReference type="GeneID" id="3770576"/>
<dbReference type="Gramene" id="AT4G32714.1">
    <property type="protein sequence ID" value="AT4G32714.1"/>
    <property type="gene ID" value="AT4G32714"/>
</dbReference>
<dbReference type="KEGG" id="ath:AT4G32714"/>
<dbReference type="Araport" id="AT4G32714"/>
<dbReference type="TAIR" id="AT4G32714">
    <property type="gene designation" value="SCRL25"/>
</dbReference>
<dbReference type="HOGENOM" id="CLU_2486425_0_0_1"/>
<dbReference type="InParanoid" id="P82644"/>
<dbReference type="OMA" id="TCQRIED"/>
<dbReference type="OrthoDB" id="1090030at2759"/>
<dbReference type="PhylomeDB" id="P82644"/>
<dbReference type="PRO" id="PR:P82644"/>
<dbReference type="Proteomes" id="UP000006548">
    <property type="component" value="Chromosome 4"/>
</dbReference>
<dbReference type="ExpressionAtlas" id="P82644">
    <property type="expression patterns" value="baseline"/>
</dbReference>
<dbReference type="GO" id="GO:0005576">
    <property type="term" value="C:extracellular region"/>
    <property type="evidence" value="ECO:0007669"/>
    <property type="project" value="UniProtKB-SubCell"/>
</dbReference>
<dbReference type="GO" id="GO:0050832">
    <property type="term" value="P:defense response to fungus"/>
    <property type="evidence" value="ECO:0007669"/>
    <property type="project" value="UniProtKB-KW"/>
</dbReference>
<dbReference type="GO" id="GO:0031640">
    <property type="term" value="P:killing of cells of another organism"/>
    <property type="evidence" value="ECO:0007669"/>
    <property type="project" value="UniProtKB-KW"/>
</dbReference>
<dbReference type="GO" id="GO:0007165">
    <property type="term" value="P:signal transduction"/>
    <property type="evidence" value="ECO:0007669"/>
    <property type="project" value="InterPro"/>
</dbReference>
<dbReference type="InterPro" id="IPR010682">
    <property type="entry name" value="SCRL"/>
</dbReference>
<dbReference type="PANTHER" id="PTHR34450:SF6">
    <property type="entry name" value="DEFENSIN-LIKE PROTEIN 241-RELATED"/>
    <property type="match status" value="1"/>
</dbReference>
<dbReference type="PANTHER" id="PTHR34450">
    <property type="entry name" value="DEFENSIN-LIKE PROTEIN 245-RELATED"/>
    <property type="match status" value="1"/>
</dbReference>
<dbReference type="Pfam" id="PF06876">
    <property type="entry name" value="SCRL"/>
    <property type="match status" value="1"/>
</dbReference>
<gene>
    <name type="primary">SCRL25</name>
    <name type="ordered locus">At4g32714</name>
    <name type="ORF">F4D11</name>
</gene>
<keyword id="KW-0929">Antimicrobial</keyword>
<keyword id="KW-1015">Disulfide bond</keyword>
<keyword id="KW-0295">Fungicide</keyword>
<keyword id="KW-0611">Plant defense</keyword>
<keyword id="KW-1185">Reference proteome</keyword>
<keyword id="KW-0964">Secreted</keyword>
<keyword id="KW-0732">Signal</keyword>
<proteinExistence type="inferred from homology"/>
<organism evidence="3">
    <name type="scientific">Arabidopsis thaliana</name>
    <name type="common">Mouse-ear cress</name>
    <dbReference type="NCBI Taxonomy" id="3702"/>
    <lineage>
        <taxon>Eukaryota</taxon>
        <taxon>Viridiplantae</taxon>
        <taxon>Streptophyta</taxon>
        <taxon>Embryophyta</taxon>
        <taxon>Tracheophyta</taxon>
        <taxon>Spermatophyta</taxon>
        <taxon>Magnoliopsida</taxon>
        <taxon>eudicotyledons</taxon>
        <taxon>Gunneridae</taxon>
        <taxon>Pentapetalae</taxon>
        <taxon>rosids</taxon>
        <taxon>malvids</taxon>
        <taxon>Brassicales</taxon>
        <taxon>Brassicaceae</taxon>
        <taxon>Camelineae</taxon>
        <taxon>Arabidopsis</taxon>
    </lineage>
</organism>
<sequence length="87" mass="10132">MKFATCFLVSYVLVFLVLSVCKEVEAKELCNRIEDIDGNCDFEGEKGCLKFMTNKYKKERHVSCTCTNLYMLHKTKRFCDCKHRCSG</sequence>